<evidence type="ECO:0000250" key="1"/>
<evidence type="ECO:0000250" key="2">
    <source>
        <dbReference type="UniProtKB" id="O08678"/>
    </source>
</evidence>
<evidence type="ECO:0000250" key="3">
    <source>
        <dbReference type="UniProtKB" id="Q7KZI7"/>
    </source>
</evidence>
<evidence type="ECO:0000250" key="4">
    <source>
        <dbReference type="UniProtKB" id="Q9H0K1"/>
    </source>
</evidence>
<evidence type="ECO:0000255" key="5">
    <source>
        <dbReference type="PROSITE-ProRule" id="PRU00159"/>
    </source>
</evidence>
<evidence type="ECO:0000255" key="6">
    <source>
        <dbReference type="PROSITE-ProRule" id="PRU00212"/>
    </source>
</evidence>
<evidence type="ECO:0000255" key="7">
    <source>
        <dbReference type="PROSITE-ProRule" id="PRU00565"/>
    </source>
</evidence>
<evidence type="ECO:0000255" key="8">
    <source>
        <dbReference type="PROSITE-ProRule" id="PRU10027"/>
    </source>
</evidence>
<evidence type="ECO:0000256" key="9">
    <source>
        <dbReference type="SAM" id="MobiDB-lite"/>
    </source>
</evidence>
<evidence type="ECO:0000269" key="10">
    <source>
    </source>
</evidence>
<evidence type="ECO:0000269" key="11">
    <source>
    </source>
</evidence>
<evidence type="ECO:0000269" key="12">
    <source>
    </source>
</evidence>
<evidence type="ECO:0000269" key="13">
    <source>
    </source>
</evidence>
<evidence type="ECO:0000269" key="14">
    <source>
    </source>
</evidence>
<evidence type="ECO:0000269" key="15">
    <source>
    </source>
</evidence>
<evidence type="ECO:0000269" key="16">
    <source>
    </source>
</evidence>
<evidence type="ECO:0000269" key="17">
    <source>
    </source>
</evidence>
<evidence type="ECO:0000269" key="18">
    <source>
    </source>
</evidence>
<evidence type="ECO:0000269" key="19">
    <source>
    </source>
</evidence>
<evidence type="ECO:0000305" key="20"/>
<evidence type="ECO:0000312" key="21">
    <source>
        <dbReference type="EMBL" id="CAB06295.1"/>
    </source>
</evidence>
<evidence type="ECO:0000312" key="22">
    <source>
        <dbReference type="RGD" id="708483"/>
    </source>
</evidence>
<evidence type="ECO:0007744" key="23">
    <source>
    </source>
</evidence>
<evidence type="ECO:0007829" key="24">
    <source>
        <dbReference type="PDB" id="1Y8G"/>
    </source>
</evidence>
<evidence type="ECO:0007829" key="25">
    <source>
        <dbReference type="PDB" id="2R0I"/>
    </source>
</evidence>
<evidence type="ECO:0007829" key="26">
    <source>
        <dbReference type="PDB" id="2WZJ"/>
    </source>
</evidence>
<comment type="function">
    <text evidence="3 10 11 12 16 19">Serine/threonine-protein kinase. Involved in cell polarity and microtubule dynamics regulation. Phosphorylates CRTC2/TORC2, DCX, HDAC7, KIF13B, MAP2, MAP4 and RAB11FIP2. Phosphorylates the microtubule-associated protein MAPT/TAU. Plays a key role in cell polarity by phosphorylating the microtubule-associated proteins MAP2, MAP4 and MAPT/TAU at KXGS motifs, causing detachment from microtubules, and their disassembly. Regulates epithelial cell polarity by phosphorylating RAB11FIP2. Involved in the regulation of neuronal migration through its dual activities in regulating cellular polarity and microtubule dynamics, possibly by phosphorylating and regulating DCX. Regulates axogenesis by phosphorylating KIF13B, promoting interaction between KIF13B and 14-3-3 and inhibiting microtubule-dependent accumulation of KIF13B. Also required for neurite outgrowth and establishment of neuronal polarity. Regulates localization and activity of some histone deacetylases by mediating phosphorylation of HDAC7, promoting subsequent interaction between HDAC7 and 14-3-3 and export from the nucleus. Also acts as a positive regulator of the Wnt signaling pathway, probably by mediating phosphorylation of dishevelled proteins (DVL1, DVL2 and/or DVL3). Modulates the developmental decision to build a columnar versus a hepatic epithelial cell apparently by promoting a switch from a direct to a transcytotic mode of apical protein delivery. Essential for the asymmetric development of membrane domains of polarized epithelial cells.</text>
</comment>
<comment type="catalytic activity">
    <reaction evidence="3">
        <text>L-seryl-[protein] + ATP = O-phospho-L-seryl-[protein] + ADP + H(+)</text>
        <dbReference type="Rhea" id="RHEA:17989"/>
        <dbReference type="Rhea" id="RHEA-COMP:9863"/>
        <dbReference type="Rhea" id="RHEA-COMP:11604"/>
        <dbReference type="ChEBI" id="CHEBI:15378"/>
        <dbReference type="ChEBI" id="CHEBI:29999"/>
        <dbReference type="ChEBI" id="CHEBI:30616"/>
        <dbReference type="ChEBI" id="CHEBI:83421"/>
        <dbReference type="ChEBI" id="CHEBI:456216"/>
        <dbReference type="EC" id="2.7.11.1"/>
    </reaction>
</comment>
<comment type="catalytic activity">
    <reaction evidence="3">
        <text>L-threonyl-[protein] + ATP = O-phospho-L-threonyl-[protein] + ADP + H(+)</text>
        <dbReference type="Rhea" id="RHEA:46608"/>
        <dbReference type="Rhea" id="RHEA-COMP:11060"/>
        <dbReference type="Rhea" id="RHEA-COMP:11605"/>
        <dbReference type="ChEBI" id="CHEBI:15378"/>
        <dbReference type="ChEBI" id="CHEBI:30013"/>
        <dbReference type="ChEBI" id="CHEBI:30616"/>
        <dbReference type="ChEBI" id="CHEBI:61977"/>
        <dbReference type="ChEBI" id="CHEBI:456216"/>
        <dbReference type="EC" id="2.7.11.1"/>
    </reaction>
</comment>
<comment type="catalytic activity">
    <reaction>
        <text>L-seryl-[tau protein] + ATP = O-phospho-L-seryl-[tau protein] + ADP + H(+)</text>
        <dbReference type="Rhea" id="RHEA:12801"/>
        <dbReference type="Rhea" id="RHEA-COMP:13701"/>
        <dbReference type="Rhea" id="RHEA-COMP:13702"/>
        <dbReference type="ChEBI" id="CHEBI:15378"/>
        <dbReference type="ChEBI" id="CHEBI:29999"/>
        <dbReference type="ChEBI" id="CHEBI:30616"/>
        <dbReference type="ChEBI" id="CHEBI:83421"/>
        <dbReference type="ChEBI" id="CHEBI:456216"/>
        <dbReference type="EC" id="2.7.11.26"/>
    </reaction>
</comment>
<comment type="catalytic activity">
    <reaction>
        <text>L-threonyl-[tau protein] + ATP = O-phospho-L-threonyl-[tau protein] + ADP + H(+)</text>
        <dbReference type="Rhea" id="RHEA:53904"/>
        <dbReference type="Rhea" id="RHEA-COMP:13703"/>
        <dbReference type="Rhea" id="RHEA-COMP:13704"/>
        <dbReference type="ChEBI" id="CHEBI:15378"/>
        <dbReference type="ChEBI" id="CHEBI:30013"/>
        <dbReference type="ChEBI" id="CHEBI:30616"/>
        <dbReference type="ChEBI" id="CHEBI:61977"/>
        <dbReference type="ChEBI" id="CHEBI:456216"/>
        <dbReference type="EC" id="2.7.11.26"/>
    </reaction>
</comment>
<comment type="cofactor">
    <cofactor evidence="3">
        <name>Mg(2+)</name>
        <dbReference type="ChEBI" id="CHEBI:18420"/>
    </cofactor>
</comment>
<comment type="activity regulation">
    <text evidence="1 10">Inhibited by hymenialdisine (By similarity). Activated by phosphorylation on Thr-208 by STK11/LKB1 and TAOK1. Inhibited by phosphorylation at Ser-212 or Thr-539. Inhibited by PAK5; inhibition is independent of the kinase activity of PAK5.</text>
</comment>
<comment type="subunit">
    <text evidence="3 13 15">Homodimer (PubMed:16472737). Interacts (when phosphorylated at Thr-539) with YWHAZ (By similarity). Interacts with MTCL1; the interaction is direct and increases MARK2 microtubule-binding ability (By similarity). Interacts with PAK5; leading to inhibit the protein kinase activity (PubMed:16014608). Interacts with MAPT/TAU (By similarity). Interacts with YWHAB, YWHAG and YWHAQ (By similarity).</text>
</comment>
<comment type="subcellular location">
    <subcellularLocation>
        <location evidence="11">Cell membrane</location>
        <topology evidence="11">Peripheral membrane protein</topology>
    </subcellularLocation>
    <subcellularLocation>
        <location evidence="1">Lateral cell membrane</location>
    </subcellularLocation>
    <subcellularLocation>
        <location evidence="1">Cytoplasm</location>
        <location evidence="1">Cytoskeleton</location>
    </subcellularLocation>
    <subcellularLocation>
        <location evidence="3">Cytoplasm</location>
    </subcellularLocation>
    <subcellularLocation>
        <location evidence="3">Cell projection</location>
        <location evidence="3">Dendrite</location>
    </subcellularLocation>
    <text evidence="1">Phosphorylation at Thr-539 by PRKCZ/aPKC and subsequent interaction with 14-3-3 protein YWHAZ promotes relocation from the cell membrane to the cytoplasm.</text>
</comment>
<comment type="domain">
    <text evidence="1">The KA1 domain mediates binding to phospholipids and targeting to membranes.</text>
</comment>
<comment type="domain">
    <text evidence="1">The UBA domain does not seem to bind ubiquitin and ubiquitin-like and might play a role in regulating the enzyme conformation and localization. Activation of the kinase activity following phosphorylation at Thr-208 is accompanied by a conformational change that alters the orientation of the UBA domain with respect to the catalytic domain (By similarity).</text>
</comment>
<comment type="PTM">
    <text evidence="10 14 16 17 18">Autophosphorylated. Phosphorylated at Thr-208 by STK11/LKB1 in complex with STE20-related adapter-alpha (STRADA) pseudo kinase and CAB39. Phosphorylation at Thr-208 by TAOK1 activates the kinase activity, leading to phosphorylation and detachment of MAPT/TAU from microtubules. Phosphorylation at Ser-212 by GSK3-beta (GSK3B) inhibits the kinase activity. Phosphorylation by CaMK1 promotes activity and is required to promote neurite outgrowth. Phosphorylation at Thr-539 by PRKCZ/aPKC in polarized epithelial cells inhibits the kinase activity and promotes binding to 14-3-3 protein YWHAZ, leading to relocation from cell membrane to cytoplasm.</text>
</comment>
<comment type="similarity">
    <text evidence="20">Belongs to the protein kinase superfamily. CAMK Ser/Thr protein kinase family. SNF1 subfamily.</text>
</comment>
<name>MARK2_RAT</name>
<reference evidence="20 21" key="1">
    <citation type="journal article" date="1997" name="Cell">
        <title>MARK - a novel family of protein kinases that phosphorylate microtubule-associated proteins and trigger microtubule disruption.</title>
        <authorList>
            <person name="Drewes G."/>
            <person name="Ebneth A."/>
            <person name="Preuss U."/>
            <person name="Mandelkow E.-M."/>
            <person name="Mandelkow E."/>
        </authorList>
    </citation>
    <scope>NUCLEOTIDE SEQUENCE [MRNA]</scope>
    <source>
        <strain evidence="21">Sprague-Dawley</strain>
        <tissue evidence="21">Brain</tissue>
    </source>
</reference>
<reference key="2">
    <citation type="journal article" date="2003" name="EMBO J.">
        <title>MARKK, a Ste20-like kinase, activates the polarity-inducing kinase MARK/PAR-1.</title>
        <authorList>
            <person name="Timm T."/>
            <person name="Li X.Y."/>
            <person name="Biernat J."/>
            <person name="Jiao J."/>
            <person name="Mandelkow E."/>
            <person name="Vandekerckhove J."/>
            <person name="Mandelkow E.M."/>
        </authorList>
    </citation>
    <scope>FUNCTION</scope>
    <scope>ACTIVITY REGULATION</scope>
    <scope>AUTOPHOSPHORYLATION</scope>
    <scope>PHOSPHORYLATION AT THR-58; THR-208; SER-212; SER-274 AND THR-275</scope>
    <scope>MUTAGENESIS OF THR-208 AND SER-212</scope>
</reference>
<reference key="3">
    <citation type="journal article" date="2004" name="J. Cell Biol.">
        <title>MARK/PAR1 kinase is a regulator of microtubule-dependent transport in axons.</title>
        <authorList>
            <person name="Mandelkow E.M."/>
            <person name="Thies E."/>
            <person name="Trinczek B."/>
            <person name="Biernat J."/>
            <person name="Mandelkow E."/>
        </authorList>
    </citation>
    <scope>FUNCTION</scope>
</reference>
<reference key="4">
    <citation type="journal article" date="2004" name="Neuron">
        <title>Doublecortin microtubule affinity is regulated by a balance of kinase and phosphatase activity at the leading edge of migrating neurons.</title>
        <authorList>
            <person name="Schaar B.T."/>
            <person name="Kinoshita K."/>
            <person name="McConnell S.K."/>
        </authorList>
    </citation>
    <scope>FUNCTION IN PHOSPHORYLATION OF DCX</scope>
    <scope>SUBCELLULAR LOCATION</scope>
</reference>
<reference key="5">
    <citation type="journal article" date="2005" name="J. Biol. Chem.">
        <title>GSK-3beta directly phosphorylates and activates MARK2/PAR-1.</title>
        <authorList>
            <person name="Kosuga S."/>
            <person name="Tashiro E."/>
            <person name="Kajioka T."/>
            <person name="Ueki M."/>
            <person name="Shimizu Y."/>
            <person name="Imoto M."/>
        </authorList>
    </citation>
    <scope>PHOSPHORYLATION AT SER-212</scope>
    <scope>MUTAGENESIS OF THR-208 AND SER-212</scope>
</reference>
<reference key="6">
    <citation type="journal article" date="2005" name="Mol. Biol. Cell">
        <title>PAK5 kinase is an inhibitor of MARK/Par-1, which leads to stable microtubules and dynamic actin.</title>
        <authorList>
            <person name="Matenia D."/>
            <person name="Griesshaber B."/>
            <person name="Li X.Y."/>
            <person name="Thiessen A."/>
            <person name="Johne C."/>
            <person name="Jiao J."/>
            <person name="Mandelkow E."/>
            <person name="Mandelkow E.M."/>
        </authorList>
    </citation>
    <scope>INTERACTION WITH PAK5</scope>
</reference>
<reference key="7">
    <citation type="journal article" date="2006" name="Proc. Natl. Acad. Sci. U.S.A.">
        <title>Microtubule affinity-regulating kinase 2 functions downstream of the PAR-3/PAR-6/atypical PKC complex in regulating hippocampal neuronal polarity.</title>
        <authorList>
            <person name="Chen Y.M."/>
            <person name="Wang Q.J."/>
            <person name="Hu H.S."/>
            <person name="Yu P.C."/>
            <person name="Zhu J."/>
            <person name="Drewes G."/>
            <person name="Piwnica-Worms H."/>
            <person name="Luo Z.G."/>
        </authorList>
    </citation>
    <scope>PHOSPHORYLATION AT THR-539</scope>
    <scope>MUTAGENESIS OF THR-539</scope>
    <scope>FUNCTION</scope>
</reference>
<reference key="8">
    <citation type="journal article" date="2007" name="J. Neurosci.">
        <title>A calcium- and calmodulin-dependent kinase Ialpha/microtubule affinity regulating kinase 2 signaling cascade mediates calcium-dependent neurite outgrowth.</title>
        <authorList>
            <person name="Uboha N.V."/>
            <person name="Flajolet M."/>
            <person name="Nairn A.C."/>
            <person name="Picciotto M.R."/>
        </authorList>
    </citation>
    <scope>PHOSPHORYLATION AT SER-91; SER-92; SER-93 AND THR-294</scope>
    <scope>MUTAGENESIS OF LYS-82; 91-SER--SER-93 AND THR-294</scope>
</reference>
<reference key="9">
    <citation type="journal article" date="2008" name="J. Biol. Chem.">
        <title>Glycogen synthase kinase (GSK) 3beta directly phosphorylates Serine 212 in the regulatory loop and inhibits microtubule affinity-regulating kinase (MARK) 2.</title>
        <authorList>
            <person name="Timm T."/>
            <person name="Balusamy K."/>
            <person name="Li X."/>
            <person name="Biernat J."/>
            <person name="Mandelkow E."/>
            <person name="Mandelkow E.M."/>
        </authorList>
    </citation>
    <scope>PHOSPHORYLATION AT SER-212</scope>
    <scope>MUTAGENESIS OF THR-208 AND SER-212</scope>
</reference>
<reference key="10">
    <citation type="journal article" date="2008" name="J. Neurosci.">
        <title>Accurate balance of the polarity kinase MARK2/Par-1 is required for proper cortical neuronal migration.</title>
        <authorList>
            <person name="Sapir T."/>
            <person name="Sapoznik S."/>
            <person name="Levy T."/>
            <person name="Finkelshtein D."/>
            <person name="Shmueli A."/>
            <person name="Timm T."/>
            <person name="Mandelkow E.M."/>
            <person name="Reiner O."/>
        </authorList>
    </citation>
    <scope>FUNCTION</scope>
</reference>
<reference key="11">
    <citation type="journal article" date="2012" name="Nat. Commun.">
        <title>Quantitative maps of protein phosphorylation sites across 14 different rat organs and tissues.</title>
        <authorList>
            <person name="Lundby A."/>
            <person name="Secher A."/>
            <person name="Lage K."/>
            <person name="Nordsborg N.B."/>
            <person name="Dmytriyev A."/>
            <person name="Lundby C."/>
            <person name="Olsen J.V."/>
        </authorList>
    </citation>
    <scope>PHOSPHORYLATION [LARGE SCALE ANALYSIS] AT SER-408; SER-409; SER-453 AND SER-483</scope>
    <scope>IDENTIFICATION BY MASS SPECTROMETRY [LARGE SCALE ANALYSIS]</scope>
</reference>
<reference key="12">
    <citation type="journal article" date="2006" name="Structure">
        <title>Structure of the catalytic and ubiquitin-associated domains of the protein kinase MARK/Par-1.</title>
        <authorList>
            <person name="Panneerselvam S."/>
            <person name="Marx A."/>
            <person name="Mandelkow E.M."/>
            <person name="Mandelkow E."/>
        </authorList>
    </citation>
    <scope>X-RAY CRYSTALLOGRAPHY (2.2 ANGSTROMS) OF 39-364 OF WILD-TYPE AND MUTANT THR-208 AND SER-212</scope>
    <scope>SUBUNIT</scope>
</reference>
<reference key="13">
    <citation type="journal article" date="2010" name="FASEB J.">
        <title>Structure and function of polarity-inducing kinase family MARK/Par-1 within the branch of AMPK/Snf1-related kinases.</title>
        <authorList>
            <person name="Marx A."/>
            <person name="Nugoor C."/>
            <person name="Panneerselvam S."/>
            <person name="Mandelkow E."/>
        </authorList>
    </citation>
    <scope>X-RAY CRYSTALLOGRAPHY (2.79 ANGSTROMS) OF 39-364</scope>
</reference>
<protein>
    <recommendedName>
        <fullName>Serine/threonine-protein kinase MARK2</fullName>
        <ecNumber>2.7.11.1</ecNumber>
        <ecNumber>2.7.11.26</ecNumber>
    </recommendedName>
    <alternativeName>
        <fullName>ELKL motif kinase 1</fullName>
        <shortName>EMK-1</shortName>
    </alternativeName>
    <alternativeName>
        <fullName>MAP/microtubule affinity-regulating kinase 2</fullName>
    </alternativeName>
</protein>
<gene>
    <name evidence="22" type="primary">Mark2</name>
</gene>
<accession>O08679</accession>
<keyword id="KW-0002">3D-structure</keyword>
<keyword id="KW-0067">ATP-binding</keyword>
<keyword id="KW-1003">Cell membrane</keyword>
<keyword id="KW-0966">Cell projection</keyword>
<keyword id="KW-0963">Cytoplasm</keyword>
<keyword id="KW-0206">Cytoskeleton</keyword>
<keyword id="KW-0217">Developmental protein</keyword>
<keyword id="KW-0221">Differentiation</keyword>
<keyword id="KW-0418">Kinase</keyword>
<keyword id="KW-0446">Lipid-binding</keyword>
<keyword id="KW-0460">Magnesium</keyword>
<keyword id="KW-0472">Membrane</keyword>
<keyword id="KW-0479">Metal-binding</keyword>
<keyword id="KW-0547">Nucleotide-binding</keyword>
<keyword id="KW-0597">Phosphoprotein</keyword>
<keyword id="KW-1185">Reference proteome</keyword>
<keyword id="KW-0723">Serine/threonine-protein kinase</keyword>
<keyword id="KW-0808">Transferase</keyword>
<keyword id="KW-0879">Wnt signaling pathway</keyword>
<feature type="chain" id="PRO_0000086303" description="Serine/threonine-protein kinase MARK2">
    <location>
        <begin position="1"/>
        <end position="722"/>
    </location>
</feature>
<feature type="domain" description="Protein kinase" evidence="5">
    <location>
        <begin position="53"/>
        <end position="304"/>
    </location>
</feature>
<feature type="domain" description="UBA" evidence="6">
    <location>
        <begin position="323"/>
        <end position="362"/>
    </location>
</feature>
<feature type="domain" description="KA1" evidence="7">
    <location>
        <begin position="673"/>
        <end position="722"/>
    </location>
</feature>
<feature type="region of interest" description="Disordered" evidence="9">
    <location>
        <begin position="1"/>
        <end position="46"/>
    </location>
</feature>
<feature type="region of interest" description="Disordered" evidence="9">
    <location>
        <begin position="373"/>
        <end position="576"/>
    </location>
</feature>
<feature type="compositionally biased region" description="Polar residues" evidence="9">
    <location>
        <begin position="27"/>
        <end position="45"/>
    </location>
</feature>
<feature type="compositionally biased region" description="Polar residues" evidence="9">
    <location>
        <begin position="417"/>
        <end position="431"/>
    </location>
</feature>
<feature type="compositionally biased region" description="Basic and acidic residues" evidence="9">
    <location>
        <begin position="432"/>
        <end position="442"/>
    </location>
</feature>
<feature type="compositionally biased region" description="Polar residues" evidence="9">
    <location>
        <begin position="464"/>
        <end position="483"/>
    </location>
</feature>
<feature type="compositionally biased region" description="Polar residues" evidence="9">
    <location>
        <begin position="492"/>
        <end position="505"/>
    </location>
</feature>
<feature type="compositionally biased region" description="Low complexity" evidence="9">
    <location>
        <begin position="511"/>
        <end position="524"/>
    </location>
</feature>
<feature type="active site" description="Proton acceptor" evidence="4 5 8">
    <location>
        <position position="175"/>
    </location>
</feature>
<feature type="binding site" evidence="4 5">
    <location>
        <begin position="59"/>
        <end position="67"/>
    </location>
    <ligand>
        <name>ATP</name>
        <dbReference type="ChEBI" id="CHEBI:30616"/>
    </ligand>
</feature>
<feature type="binding site" evidence="2 5">
    <location>
        <position position="82"/>
    </location>
    <ligand>
        <name>ATP</name>
        <dbReference type="ChEBI" id="CHEBI:30616"/>
    </ligand>
</feature>
<feature type="modified residue" description="Phosphoserine" evidence="3">
    <location>
        <position position="40"/>
    </location>
</feature>
<feature type="modified residue" description="Phosphothreonine; by autocatalysis" evidence="10">
    <location>
        <position position="58"/>
    </location>
</feature>
<feature type="modified residue" description="Phosphoserine; by CaMK1" evidence="17">
    <location>
        <position position="91"/>
    </location>
</feature>
<feature type="modified residue" description="Phosphoserine; by CaMK1" evidence="17">
    <location>
        <position position="92"/>
    </location>
</feature>
<feature type="modified residue" description="Phosphoserine; by CaMK1" evidence="17">
    <location>
        <position position="93"/>
    </location>
</feature>
<feature type="modified residue" description="Phosphothreonine; by LKB1 and TAOK1" evidence="10">
    <location>
        <position position="208"/>
    </location>
</feature>
<feature type="modified residue" description="Phosphoserine; by GSK3-beta" evidence="10 14 18">
    <location>
        <position position="212"/>
    </location>
</feature>
<feature type="modified residue" description="Phosphoserine; by autocatalysis" evidence="10">
    <location>
        <position position="274"/>
    </location>
</feature>
<feature type="modified residue" description="Phosphothreonine; by autocatalysis" evidence="10">
    <location>
        <position position="275"/>
    </location>
</feature>
<feature type="modified residue" description="Phosphothreonine; by CaMK1" evidence="17">
    <location>
        <position position="294"/>
    </location>
</feature>
<feature type="modified residue" description="Phosphoserine" evidence="23">
    <location>
        <position position="408"/>
    </location>
</feature>
<feature type="modified residue" description="Phosphoserine" evidence="23">
    <location>
        <position position="409"/>
    </location>
</feature>
<feature type="modified residue" description="Phosphoserine" evidence="23">
    <location>
        <position position="453"/>
    </location>
</feature>
<feature type="modified residue" description="Phosphothreonine" evidence="3">
    <location>
        <position position="464"/>
    </location>
</feature>
<feature type="modified residue" description="Phosphoserine" evidence="23">
    <location>
        <position position="483"/>
    </location>
</feature>
<feature type="modified residue" description="Phosphoserine" evidence="3">
    <location>
        <position position="490"/>
    </location>
</feature>
<feature type="modified residue" description="Phosphoserine" evidence="3">
    <location>
        <position position="512"/>
    </location>
</feature>
<feature type="modified residue" description="Phosphoserine" evidence="3">
    <location>
        <position position="514"/>
    </location>
</feature>
<feature type="modified residue" description="Phosphoserine" evidence="3">
    <location>
        <position position="535"/>
    </location>
</feature>
<feature type="modified residue" description="Phosphothreonine; by PKC/PRKCZ" evidence="16">
    <location>
        <position position="539"/>
    </location>
</feature>
<feature type="modified residue" description="Phosphoserine" evidence="3">
    <location>
        <position position="562"/>
    </location>
</feature>
<feature type="modified residue" description="Phosphoserine" evidence="3">
    <location>
        <position position="656"/>
    </location>
</feature>
<feature type="mutagenesis site" description="Loss of kinase activity." evidence="17">
    <original>K</original>
    <variation>A</variation>
    <location>
        <position position="82"/>
    </location>
</feature>
<feature type="mutagenesis site" description="Loss of phosphorylation by CaMK1, decrease in kinase activity and ability to promote neurite outgrowth; when associated with A-294." evidence="17">
    <original>SSS</original>
    <variation>AAA</variation>
    <location>
        <begin position="91"/>
        <end position="93"/>
    </location>
</feature>
<feature type="mutagenesis site" description="Abolishes activation of serine/threonine-protein kinase activity and only basal activity remains." evidence="10 14 18">
    <original>T</original>
    <variation>A</variation>
    <location>
        <position position="208"/>
    </location>
</feature>
<feature type="mutagenesis site" description="Phosphomimetic mutant that leads to activation but not in presence of GSK3-beta." evidence="10 14 18">
    <original>T</original>
    <variation>E</variation>
    <location>
        <position position="208"/>
    </location>
</feature>
<feature type="mutagenesis site" description="Loss of activity; neither activated by TAOK1 nor by STK11/LKB1." evidence="10 14 18">
    <original>S</original>
    <variation>A</variation>
    <location>
        <position position="212"/>
    </location>
</feature>
<feature type="mutagenesis site" description="Loss of phosphorylation by CaMK1, decrease in kinase activity and ability to promote neurite outgrowth; when associated with 91-A--A-93." evidence="17">
    <original>T</original>
    <variation>A</variation>
    <location>
        <position position="294"/>
    </location>
</feature>
<feature type="mutagenesis site" description="Abolishes phosphorylation by PKC/PRKCZ." evidence="16">
    <original>T</original>
    <variation>A</variation>
    <location>
        <position position="539"/>
    </location>
</feature>
<feature type="strand" evidence="25">
    <location>
        <begin position="53"/>
        <end position="61"/>
    </location>
</feature>
<feature type="strand" evidence="25">
    <location>
        <begin position="63"/>
        <end position="72"/>
    </location>
</feature>
<feature type="turn" evidence="25">
    <location>
        <begin position="73"/>
        <end position="75"/>
    </location>
</feature>
<feature type="strand" evidence="25">
    <location>
        <begin position="78"/>
        <end position="85"/>
    </location>
</feature>
<feature type="helix" evidence="25">
    <location>
        <begin position="86"/>
        <end position="88"/>
    </location>
</feature>
<feature type="helix" evidence="25">
    <location>
        <begin position="91"/>
        <end position="106"/>
    </location>
</feature>
<feature type="strand" evidence="25">
    <location>
        <begin position="115"/>
        <end position="120"/>
    </location>
</feature>
<feature type="strand" evidence="25">
    <location>
        <begin position="122"/>
        <end position="130"/>
    </location>
</feature>
<feature type="helix" evidence="25">
    <location>
        <begin position="137"/>
        <end position="144"/>
    </location>
</feature>
<feature type="helix" evidence="25">
    <location>
        <begin position="149"/>
        <end position="168"/>
    </location>
</feature>
<feature type="helix" evidence="25">
    <location>
        <begin position="178"/>
        <end position="180"/>
    </location>
</feature>
<feature type="strand" evidence="25">
    <location>
        <begin position="181"/>
        <end position="183"/>
    </location>
</feature>
<feature type="strand" evidence="25">
    <location>
        <begin position="189"/>
        <end position="191"/>
    </location>
</feature>
<feature type="strand" evidence="26">
    <location>
        <begin position="194"/>
        <end position="196"/>
    </location>
</feature>
<feature type="strand" evidence="26">
    <location>
        <begin position="202"/>
        <end position="205"/>
    </location>
</feature>
<feature type="turn" evidence="24">
    <location>
        <begin position="208"/>
        <end position="211"/>
    </location>
</feature>
<feature type="helix" evidence="25">
    <location>
        <begin position="213"/>
        <end position="215"/>
    </location>
</feature>
<feature type="helix" evidence="25">
    <location>
        <begin position="219"/>
        <end position="222"/>
    </location>
</feature>
<feature type="helix" evidence="25">
    <location>
        <begin position="229"/>
        <end position="245"/>
    </location>
</feature>
<feature type="helix" evidence="25">
    <location>
        <begin position="255"/>
        <end position="264"/>
    </location>
</feature>
<feature type="helix" evidence="25">
    <location>
        <begin position="275"/>
        <end position="284"/>
    </location>
</feature>
<feature type="helix" evidence="25">
    <location>
        <begin position="289"/>
        <end position="291"/>
    </location>
</feature>
<feature type="helix" evidence="25">
    <location>
        <begin position="295"/>
        <end position="298"/>
    </location>
</feature>
<feature type="helix" evidence="25">
    <location>
        <begin position="302"/>
        <end position="305"/>
    </location>
</feature>
<feature type="helix" evidence="25">
    <location>
        <begin position="326"/>
        <end position="334"/>
    </location>
</feature>
<feature type="helix" evidence="25">
    <location>
        <begin position="339"/>
        <end position="347"/>
    </location>
</feature>
<feature type="helix" evidence="25">
    <location>
        <begin position="353"/>
        <end position="361"/>
    </location>
</feature>
<sequence>MSSARTPLPTLNERDTEQPTLGHLDSKPSSKSNMLRGRNSATSADEQPHIGNYRLLKTIGKGNFAKVKLARHILTGKEVAVKIIDKTQLNSSSLQKLFREVRIMKVLNHPNIVKLFEVIETEKTLYLVMEYASGGEVFDYLVAHGRMKEKEARAKFRQIVSAVQYCHQKFIVHRDLKAENLLLDADMNIKIADFGFSNEFTFGNKLDTFCGSPPYAAPELFQGKKYDGPEVDVWSLGVILYTLVSGSLPFDGQNLKELRERVLRGKYRIPFYMSTDCENLLKKFLILNPSKRGTLEQIMKDRWMNVGHEDDELKPYVEPLPDYKDPRRTELMVSMGYTREEIQDSLVGQRYNEVMATYLLLGYKSSELEGDTITLKPRPSADLTNSSAPSPSHKVQRSVSANPKQRRSSDQAVPAIPTSNSYSKKTQSNNAENKRPEEETGRKASSTAKVPASPLPGLDRKKTTPTPSTNSVLSTSTNRSRNSPLLDRASLGQASIQNGKDSTAPQRVPVASPSAHNISSSSGAPDRTNFPRGVSSRSTFHAGQLRQVRDQQNLPFGVTPASPSGHSQGRRGASGSIFSKFTSKFVRRNLNEPESKDRVETLRPHVVGGGGTDKEKEEFREAKPRSLRFTWSMKTTSSMEPNEMMREIRKVLDANSCQSELHERYMLLCVHGTPGHENFVQWEMEVCKLPRLSLNGVRFKRISGTSMAFKNIASKIANELKL</sequence>
<proteinExistence type="evidence at protein level"/>
<organism>
    <name type="scientific">Rattus norvegicus</name>
    <name type="common">Rat</name>
    <dbReference type="NCBI Taxonomy" id="10116"/>
    <lineage>
        <taxon>Eukaryota</taxon>
        <taxon>Metazoa</taxon>
        <taxon>Chordata</taxon>
        <taxon>Craniata</taxon>
        <taxon>Vertebrata</taxon>
        <taxon>Euteleostomi</taxon>
        <taxon>Mammalia</taxon>
        <taxon>Eutheria</taxon>
        <taxon>Euarchontoglires</taxon>
        <taxon>Glires</taxon>
        <taxon>Rodentia</taxon>
        <taxon>Myomorpha</taxon>
        <taxon>Muroidea</taxon>
        <taxon>Muridae</taxon>
        <taxon>Murinae</taxon>
        <taxon>Rattus</taxon>
    </lineage>
</organism>
<dbReference type="EC" id="2.7.11.1"/>
<dbReference type="EC" id="2.7.11.26"/>
<dbReference type="EMBL" id="Z83869">
    <property type="protein sequence ID" value="CAB06295.1"/>
    <property type="molecule type" value="mRNA"/>
</dbReference>
<dbReference type="RefSeq" id="NP_067731.1">
    <property type="nucleotide sequence ID" value="NM_021699.3"/>
</dbReference>
<dbReference type="PDB" id="1Y8G">
    <property type="method" value="X-ray"/>
    <property type="resolution" value="2.50 A"/>
    <property type="chains" value="A/B=39-364"/>
</dbReference>
<dbReference type="PDB" id="1ZMU">
    <property type="method" value="X-ray"/>
    <property type="resolution" value="2.90 A"/>
    <property type="chains" value="A/B=39-364"/>
</dbReference>
<dbReference type="PDB" id="1ZMV">
    <property type="method" value="X-ray"/>
    <property type="resolution" value="3.10 A"/>
    <property type="chains" value="A/B=39-364"/>
</dbReference>
<dbReference type="PDB" id="1ZMW">
    <property type="method" value="X-ray"/>
    <property type="resolution" value="2.80 A"/>
    <property type="chains" value="A/B=39-364"/>
</dbReference>
<dbReference type="PDB" id="2R0I">
    <property type="method" value="X-ray"/>
    <property type="resolution" value="2.20 A"/>
    <property type="chains" value="A/B=39-364"/>
</dbReference>
<dbReference type="PDB" id="2WZJ">
    <property type="method" value="X-ray"/>
    <property type="resolution" value="2.79 A"/>
    <property type="chains" value="A/B/C/D/E/F=39-364"/>
</dbReference>
<dbReference type="PDBsum" id="1Y8G"/>
<dbReference type="PDBsum" id="1ZMU"/>
<dbReference type="PDBsum" id="1ZMV"/>
<dbReference type="PDBsum" id="1ZMW"/>
<dbReference type="PDBsum" id="2R0I"/>
<dbReference type="PDBsum" id="2WZJ"/>
<dbReference type="SMR" id="O08679"/>
<dbReference type="BioGRID" id="248778">
    <property type="interactions" value="1"/>
</dbReference>
<dbReference type="DIP" id="DIP-29029N"/>
<dbReference type="FunCoup" id="O08679">
    <property type="interactions" value="2001"/>
</dbReference>
<dbReference type="IntAct" id="O08679">
    <property type="interactions" value="1"/>
</dbReference>
<dbReference type="MINT" id="O08679"/>
<dbReference type="STRING" id="10116.ENSRNOP00000073980"/>
<dbReference type="GlyGen" id="O08679">
    <property type="glycosylation" value="2 sites"/>
</dbReference>
<dbReference type="iPTMnet" id="O08679"/>
<dbReference type="PhosphoSitePlus" id="O08679"/>
<dbReference type="PaxDb" id="10116-ENSRNOP00000028763"/>
<dbReference type="GeneID" id="60328"/>
<dbReference type="KEGG" id="rno:60328"/>
<dbReference type="UCSC" id="RGD:708483">
    <property type="organism name" value="rat"/>
</dbReference>
<dbReference type="AGR" id="RGD:708483"/>
<dbReference type="CTD" id="2011"/>
<dbReference type="RGD" id="708483">
    <property type="gene designation" value="Mark2"/>
</dbReference>
<dbReference type="VEuPathDB" id="HostDB:ENSRNOG00000021184"/>
<dbReference type="eggNOG" id="KOG0586">
    <property type="taxonomic scope" value="Eukaryota"/>
</dbReference>
<dbReference type="InParanoid" id="O08679"/>
<dbReference type="OrthoDB" id="504170at2759"/>
<dbReference type="EvolutionaryTrace" id="O08679"/>
<dbReference type="PRO" id="PR:O08679"/>
<dbReference type="Proteomes" id="UP000002494">
    <property type="component" value="Chromosome 1"/>
</dbReference>
<dbReference type="Bgee" id="ENSRNOG00000021184">
    <property type="expression patterns" value="Expressed in jejunum and 19 other cell types or tissues"/>
</dbReference>
<dbReference type="ExpressionAtlas" id="O08679">
    <property type="expression patterns" value="baseline and differential"/>
</dbReference>
<dbReference type="GO" id="GO:0005884">
    <property type="term" value="C:actin filament"/>
    <property type="evidence" value="ECO:0000250"/>
    <property type="project" value="UniProtKB"/>
</dbReference>
<dbReference type="GO" id="GO:0045180">
    <property type="term" value="C:basal cortex"/>
    <property type="evidence" value="ECO:0000266"/>
    <property type="project" value="RGD"/>
</dbReference>
<dbReference type="GO" id="GO:0005737">
    <property type="term" value="C:cytoplasm"/>
    <property type="evidence" value="ECO:0000250"/>
    <property type="project" value="UniProtKB"/>
</dbReference>
<dbReference type="GO" id="GO:0030425">
    <property type="term" value="C:dendrite"/>
    <property type="evidence" value="ECO:0000250"/>
    <property type="project" value="UniProtKB"/>
</dbReference>
<dbReference type="GO" id="GO:0098978">
    <property type="term" value="C:glutamatergic synapse"/>
    <property type="evidence" value="ECO:0000314"/>
    <property type="project" value="SynGO"/>
</dbReference>
<dbReference type="GO" id="GO:0016328">
    <property type="term" value="C:lateral plasma membrane"/>
    <property type="evidence" value="ECO:0000250"/>
    <property type="project" value="UniProtKB"/>
</dbReference>
<dbReference type="GO" id="GO:0016020">
    <property type="term" value="C:membrane"/>
    <property type="evidence" value="ECO:0000314"/>
    <property type="project" value="UniProtKB"/>
</dbReference>
<dbReference type="GO" id="GO:0097427">
    <property type="term" value="C:microtubule bundle"/>
    <property type="evidence" value="ECO:0000250"/>
    <property type="project" value="UniProtKB"/>
</dbReference>
<dbReference type="GO" id="GO:0005634">
    <property type="term" value="C:nucleus"/>
    <property type="evidence" value="ECO:0000266"/>
    <property type="project" value="RGD"/>
</dbReference>
<dbReference type="GO" id="GO:0005886">
    <property type="term" value="C:plasma membrane"/>
    <property type="evidence" value="ECO:0000250"/>
    <property type="project" value="UniProtKB"/>
</dbReference>
<dbReference type="GO" id="GO:0098794">
    <property type="term" value="C:postsynapse"/>
    <property type="evidence" value="ECO:0000266"/>
    <property type="project" value="RGD"/>
</dbReference>
<dbReference type="GO" id="GO:0005524">
    <property type="term" value="F:ATP binding"/>
    <property type="evidence" value="ECO:0000250"/>
    <property type="project" value="UniProtKB"/>
</dbReference>
<dbReference type="GO" id="GO:0008289">
    <property type="term" value="F:lipid binding"/>
    <property type="evidence" value="ECO:0007669"/>
    <property type="project" value="UniProtKB-KW"/>
</dbReference>
<dbReference type="GO" id="GO:0000287">
    <property type="term" value="F:magnesium ion binding"/>
    <property type="evidence" value="ECO:0000250"/>
    <property type="project" value="UniProtKB"/>
</dbReference>
<dbReference type="GO" id="GO:0106310">
    <property type="term" value="F:protein serine kinase activity"/>
    <property type="evidence" value="ECO:0007669"/>
    <property type="project" value="RHEA"/>
</dbReference>
<dbReference type="GO" id="GO:0004674">
    <property type="term" value="F:protein serine/threonine kinase activity"/>
    <property type="evidence" value="ECO:0000314"/>
    <property type="project" value="UniProtKB"/>
</dbReference>
<dbReference type="GO" id="GO:0048156">
    <property type="term" value="F:tau protein binding"/>
    <property type="evidence" value="ECO:0000353"/>
    <property type="project" value="ARUK-UCL"/>
</dbReference>
<dbReference type="GO" id="GO:0050321">
    <property type="term" value="F:tau-protein kinase activity"/>
    <property type="evidence" value="ECO:0000314"/>
    <property type="project" value="UniProtKB"/>
</dbReference>
<dbReference type="GO" id="GO:0061564">
    <property type="term" value="P:axon development"/>
    <property type="evidence" value="ECO:0000315"/>
    <property type="project" value="ARUK-UCL"/>
</dbReference>
<dbReference type="GO" id="GO:0030010">
    <property type="term" value="P:establishment of cell polarity"/>
    <property type="evidence" value="ECO:0000250"/>
    <property type="project" value="UniProtKB"/>
</dbReference>
<dbReference type="GO" id="GO:0071963">
    <property type="term" value="P:establishment or maintenance of cell polarity regulating cell shape"/>
    <property type="evidence" value="ECO:0000315"/>
    <property type="project" value="ARUK-UCL"/>
</dbReference>
<dbReference type="GO" id="GO:0045197">
    <property type="term" value="P:establishment or maintenance of epithelial cell apical/basal polarity"/>
    <property type="evidence" value="ECO:0000250"/>
    <property type="project" value="UniProtKB"/>
</dbReference>
<dbReference type="GO" id="GO:0035556">
    <property type="term" value="P:intracellular signal transduction"/>
    <property type="evidence" value="ECO:0000250"/>
    <property type="project" value="UniProtKB"/>
</dbReference>
<dbReference type="GO" id="GO:0000226">
    <property type="term" value="P:microtubule cytoskeleton organization"/>
    <property type="evidence" value="ECO:0000318"/>
    <property type="project" value="GO_Central"/>
</dbReference>
<dbReference type="GO" id="GO:0001764">
    <property type="term" value="P:neuron migration"/>
    <property type="evidence" value="ECO:0000314"/>
    <property type="project" value="UniProtKB"/>
</dbReference>
<dbReference type="GO" id="GO:0018105">
    <property type="term" value="P:peptidyl-serine phosphorylation"/>
    <property type="evidence" value="ECO:0000314"/>
    <property type="project" value="ARUK-UCL"/>
</dbReference>
<dbReference type="GO" id="GO:0010976">
    <property type="term" value="P:positive regulation of neuron projection development"/>
    <property type="evidence" value="ECO:0000250"/>
    <property type="project" value="UniProtKB"/>
</dbReference>
<dbReference type="GO" id="GO:0046777">
    <property type="term" value="P:protein autophosphorylation"/>
    <property type="evidence" value="ECO:0000314"/>
    <property type="project" value="UniProtKB"/>
</dbReference>
<dbReference type="GO" id="GO:0006468">
    <property type="term" value="P:protein phosphorylation"/>
    <property type="evidence" value="ECO:0000250"/>
    <property type="project" value="UniProtKB"/>
</dbReference>
<dbReference type="GO" id="GO:0050770">
    <property type="term" value="P:regulation of axonogenesis"/>
    <property type="evidence" value="ECO:0000250"/>
    <property type="project" value="UniProtKB"/>
</dbReference>
<dbReference type="GO" id="GO:0051493">
    <property type="term" value="P:regulation of cytoskeleton organization"/>
    <property type="evidence" value="ECO:0000314"/>
    <property type="project" value="UniProtKB"/>
</dbReference>
<dbReference type="GO" id="GO:0070507">
    <property type="term" value="P:regulation of microtubule cytoskeleton organization"/>
    <property type="evidence" value="ECO:0000314"/>
    <property type="project" value="ARUK-UCL"/>
</dbReference>
<dbReference type="GO" id="GO:1902996">
    <property type="term" value="P:regulation of neurofibrillary tangle assembly"/>
    <property type="evidence" value="ECO:0000315"/>
    <property type="project" value="ARUK-UCL"/>
</dbReference>
<dbReference type="GO" id="GO:0099175">
    <property type="term" value="P:regulation of postsynapse organization"/>
    <property type="evidence" value="ECO:0000314"/>
    <property type="project" value="SynGO"/>
</dbReference>
<dbReference type="GO" id="GO:0016055">
    <property type="term" value="P:Wnt signaling pathway"/>
    <property type="evidence" value="ECO:0007669"/>
    <property type="project" value="UniProtKB-KW"/>
</dbReference>
<dbReference type="CDD" id="cd12201">
    <property type="entry name" value="MARK2_C"/>
    <property type="match status" value="1"/>
</dbReference>
<dbReference type="CDD" id="cd14072">
    <property type="entry name" value="STKc_MARK"/>
    <property type="match status" value="1"/>
</dbReference>
<dbReference type="CDD" id="cd14406">
    <property type="entry name" value="UBA_MARK2"/>
    <property type="match status" value="1"/>
</dbReference>
<dbReference type="FunFam" id="1.10.510.10:FF:001032">
    <property type="entry name" value="KP78b, isoform A"/>
    <property type="match status" value="1"/>
</dbReference>
<dbReference type="FunFam" id="1.10.8.10:FF:000013">
    <property type="entry name" value="Non-specific serine/threonine protein kinase"/>
    <property type="match status" value="1"/>
</dbReference>
<dbReference type="FunFam" id="3.30.200.20:FF:000003">
    <property type="entry name" value="Non-specific serine/threonine protein kinase"/>
    <property type="match status" value="1"/>
</dbReference>
<dbReference type="FunFam" id="3.30.310.80:FF:000001">
    <property type="entry name" value="Non-specific serine/threonine protein kinase"/>
    <property type="match status" value="1"/>
</dbReference>
<dbReference type="Gene3D" id="1.10.8.10">
    <property type="entry name" value="DNA helicase RuvA subunit, C-terminal domain"/>
    <property type="match status" value="1"/>
</dbReference>
<dbReference type="Gene3D" id="3.30.310.80">
    <property type="entry name" value="Kinase associated domain 1, KA1"/>
    <property type="match status" value="1"/>
</dbReference>
<dbReference type="Gene3D" id="3.30.200.20">
    <property type="entry name" value="Phosphorylase Kinase, domain 1"/>
    <property type="match status" value="1"/>
</dbReference>
<dbReference type="Gene3D" id="1.10.510.10">
    <property type="entry name" value="Transferase(Phosphotransferase) domain 1"/>
    <property type="match status" value="1"/>
</dbReference>
<dbReference type="InterPro" id="IPR028375">
    <property type="entry name" value="KA1/Ssp2_C"/>
</dbReference>
<dbReference type="InterPro" id="IPR001772">
    <property type="entry name" value="KA1_dom"/>
</dbReference>
<dbReference type="InterPro" id="IPR011009">
    <property type="entry name" value="Kinase-like_dom_sf"/>
</dbReference>
<dbReference type="InterPro" id="IPR049508">
    <property type="entry name" value="MARK1-4_cat"/>
</dbReference>
<dbReference type="InterPro" id="IPR000719">
    <property type="entry name" value="Prot_kinase_dom"/>
</dbReference>
<dbReference type="InterPro" id="IPR017441">
    <property type="entry name" value="Protein_kinase_ATP_BS"/>
</dbReference>
<dbReference type="InterPro" id="IPR008271">
    <property type="entry name" value="Ser/Thr_kinase_AS"/>
</dbReference>
<dbReference type="InterPro" id="IPR015940">
    <property type="entry name" value="UBA"/>
</dbReference>
<dbReference type="PANTHER" id="PTHR24346">
    <property type="entry name" value="MAP/MICROTUBULE AFFINITY-REGULATING KINASE"/>
    <property type="match status" value="1"/>
</dbReference>
<dbReference type="PANTHER" id="PTHR24346:SF56">
    <property type="entry name" value="SERINE_THREONINE-PROTEIN KINASE MARK2"/>
    <property type="match status" value="1"/>
</dbReference>
<dbReference type="Pfam" id="PF02149">
    <property type="entry name" value="KA1"/>
    <property type="match status" value="1"/>
</dbReference>
<dbReference type="Pfam" id="PF00069">
    <property type="entry name" value="Pkinase"/>
    <property type="match status" value="1"/>
</dbReference>
<dbReference type="Pfam" id="PF00627">
    <property type="entry name" value="UBA"/>
    <property type="match status" value="1"/>
</dbReference>
<dbReference type="SMART" id="SM00220">
    <property type="entry name" value="S_TKc"/>
    <property type="match status" value="1"/>
</dbReference>
<dbReference type="SMART" id="SM00165">
    <property type="entry name" value="UBA"/>
    <property type="match status" value="1"/>
</dbReference>
<dbReference type="SUPFAM" id="SSF103243">
    <property type="entry name" value="KA1-like"/>
    <property type="match status" value="1"/>
</dbReference>
<dbReference type="SUPFAM" id="SSF56112">
    <property type="entry name" value="Protein kinase-like (PK-like)"/>
    <property type="match status" value="1"/>
</dbReference>
<dbReference type="PROSITE" id="PS50032">
    <property type="entry name" value="KA1"/>
    <property type="match status" value="1"/>
</dbReference>
<dbReference type="PROSITE" id="PS00107">
    <property type="entry name" value="PROTEIN_KINASE_ATP"/>
    <property type="match status" value="1"/>
</dbReference>
<dbReference type="PROSITE" id="PS50011">
    <property type="entry name" value="PROTEIN_KINASE_DOM"/>
    <property type="match status" value="1"/>
</dbReference>
<dbReference type="PROSITE" id="PS00108">
    <property type="entry name" value="PROTEIN_KINASE_ST"/>
    <property type="match status" value="1"/>
</dbReference>
<dbReference type="PROSITE" id="PS50030">
    <property type="entry name" value="UBA"/>
    <property type="match status" value="1"/>
</dbReference>